<dbReference type="GO" id="GO:0005576">
    <property type="term" value="C:extracellular region"/>
    <property type="evidence" value="ECO:0007669"/>
    <property type="project" value="UniProtKB-SubCell"/>
</dbReference>
<dbReference type="GO" id="GO:0090729">
    <property type="term" value="F:toxin activity"/>
    <property type="evidence" value="ECO:0007669"/>
    <property type="project" value="UniProtKB-KW"/>
</dbReference>
<dbReference type="GO" id="GO:0042742">
    <property type="term" value="P:defense response to bacterium"/>
    <property type="evidence" value="ECO:0007669"/>
    <property type="project" value="UniProtKB-KW"/>
</dbReference>
<evidence type="ECO:0000269" key="1">
    <source>
    </source>
</evidence>
<evidence type="ECO:0000303" key="2">
    <source>
    </source>
</evidence>
<evidence type="ECO:0000305" key="3"/>
<evidence type="ECO:0000305" key="4">
    <source>
    </source>
</evidence>
<proteinExistence type="evidence at protein level"/>
<reference key="1">
    <citation type="journal article" date="2021" name="Proc. Natl. Acad. Sci. U.S.A.">
        <title>Production, composition, and mode of action of the painful defensive venom produced by a limacodid caterpillar, Doratifera vulnerans.</title>
        <authorList>
            <person name="Walker A.A."/>
            <person name="Robinson S.D."/>
            <person name="Paluzzi J.V."/>
            <person name="Merritt D.J."/>
            <person name="Nixon S.A."/>
            <person name="Schroeder C.I."/>
            <person name="Jin J."/>
            <person name="Goudarzi M.H."/>
            <person name="Kotze A.C."/>
            <person name="Dekan Z."/>
            <person name="Sombke A."/>
            <person name="Alewood P.F."/>
            <person name="Fry B.G."/>
            <person name="Epstein M.E."/>
            <person name="Vetter I."/>
            <person name="King G.F."/>
        </authorList>
    </citation>
    <scope>NUCLEOTIDE SEQUENCE [MRNA]</scope>
    <scope>PROTEIN SEQUENCE OF 25-57</scope>
    <scope>FUNCTION</scope>
    <scope>SUBCELLULAR LOCATION</scope>
    <scope>TOXIC DOSE</scope>
    <scope>IDENTIFICATION BY MASS SPECTROMETRY</scope>
    <source>
        <tissue>Venom</tissue>
    </source>
</reference>
<sequence>MKFAKTFLLLFVVLLLLSIVMAEPKRGFGKLLRKVFKVGRRVAGSAAEISGSSGGEE</sequence>
<organism>
    <name type="scientific">Doratifera vulnerans</name>
    <name type="common">Mottled cup moth</name>
    <dbReference type="NCBI Taxonomy" id="1372962"/>
    <lineage>
        <taxon>Eukaryota</taxon>
        <taxon>Metazoa</taxon>
        <taxon>Ecdysozoa</taxon>
        <taxon>Arthropoda</taxon>
        <taxon>Hexapoda</taxon>
        <taxon>Insecta</taxon>
        <taxon>Pterygota</taxon>
        <taxon>Neoptera</taxon>
        <taxon>Endopterygota</taxon>
        <taxon>Lepidoptera</taxon>
        <taxon>Glossata</taxon>
        <taxon>Ditrysia</taxon>
        <taxon>Zygaenoidea</taxon>
        <taxon>Limacodidae</taxon>
        <taxon>Doratifera</taxon>
    </lineage>
</organism>
<comment type="function">
    <text evidence="1">Peptide that induces pain in mammals and has insecticidal, antibacterial and antiparasitic activities. Induces partially reversible paralysis in D.melanogaster when tested at high doses. Shows a moderate antiparasitic activity against the major pathogenic nematode of ruminants (H.contortus, EC(50)=30.5 uM). Has potent or moderate antibacterial activities against A.baumannii (MIC&lt;0.25 ug/mL) and S.aureus (MIC=16 ug/mL). Has no activity on the other bacteria tested, nor on the fungus C.albicans. Strongly induces the increase of intracellular calcium in mice DRG neurons, which is a proxy for neuronal activation that would occur during nociception. This increase is due to influx of extracellular calcium, suggesting that the peptide forms pore or channel in neuronal cell membranes. In addition, intraplantar injection in mice provokes nocifensive behavior, suggesting a pain-inducing activity.</text>
</comment>
<comment type="subcellular location">
    <subcellularLocation>
        <location evidence="1">Secreted</location>
    </subcellularLocation>
</comment>
<comment type="tissue specificity">
    <text evidence="4">Expressed by the venom secretory cell of the spine. The spine is a cuticular structure containing a single large nucleated venom-secreting cell at its base. It is an independent unit capable of producing, storing and injecting venom. On the back of D.vulnerans caterpillars, spines are grouped together by 50 to 100 to form scoli, of which there are eight in D.vulnerans.</text>
</comment>
<comment type="developmental stage">
    <text evidence="1">Only secreted by larvae. Adult moth do not have spines.</text>
</comment>
<comment type="toxic dose">
    <text evidence="1">PD(50) is 4.73 nmol/g when injected into D.melanogaster.</text>
</comment>
<comment type="similarity">
    <text evidence="3">Belongs to the limacoditoxin-2 (cecropin-like) family.</text>
</comment>
<protein>
    <recommendedName>
        <fullName evidence="2">DELTA-limacoditoxin(2)-Dv11</fullName>
        <shortName evidence="2">DELTA-LCTX(2)-Dv11</shortName>
    </recommendedName>
    <alternativeName>
        <fullName evidence="2">Cecropin-like peptide</fullName>
    </alternativeName>
    <alternativeName>
        <fullName evidence="2">Vulnericin</fullName>
    </alternativeName>
</protein>
<accession>P0DUS5</accession>
<keyword id="KW-0044">Antibiotic</keyword>
<keyword id="KW-0929">Antimicrobial</keyword>
<keyword id="KW-0903">Direct protein sequencing</keyword>
<keyword id="KW-0964">Secreted</keyword>
<keyword id="KW-0732">Signal</keyword>
<keyword id="KW-0800">Toxin</keyword>
<feature type="signal peptide" evidence="1">
    <location>
        <begin position="1"/>
        <end position="24"/>
    </location>
</feature>
<feature type="peptide" id="PRO_0000453401" description="DELTA-limacoditoxin(2)-Dv11" evidence="1">
    <location>
        <begin position="25"/>
        <end position="57"/>
    </location>
</feature>
<name>D211_DORVU</name>